<evidence type="ECO:0000269" key="1">
    <source>
    </source>
</evidence>
<evidence type="ECO:0000303" key="2">
    <source>
    </source>
</evidence>
<evidence type="ECO:0000305" key="3"/>
<evidence type="ECO:0000305" key="4">
    <source>
    </source>
</evidence>
<evidence type="ECO:0000312" key="5">
    <source>
        <dbReference type="EMBL" id="ABB31762.1"/>
    </source>
</evidence>
<evidence type="ECO:0007744" key="6">
    <source>
        <dbReference type="PDB" id="7PXP"/>
    </source>
</evidence>
<evidence type="ECO:0007744" key="7">
    <source>
        <dbReference type="PDB" id="7PYT"/>
    </source>
</evidence>
<evidence type="ECO:0007744" key="8">
    <source>
        <dbReference type="PDB" id="7YXM"/>
    </source>
</evidence>
<evidence type="ECO:0007829" key="9">
    <source>
        <dbReference type="PDB" id="7PXP"/>
    </source>
</evidence>
<evidence type="ECO:0007829" key="10">
    <source>
        <dbReference type="PDB" id="7PYT"/>
    </source>
</evidence>
<organism>
    <name type="scientific">Geobacter metallireducens (strain ATCC 53774 / DSM 7210 / GS-15)</name>
    <dbReference type="NCBI Taxonomy" id="269799"/>
    <lineage>
        <taxon>Bacteria</taxon>
        <taxon>Pseudomonadati</taxon>
        <taxon>Thermodesulfobacteriota</taxon>
        <taxon>Desulfuromonadia</taxon>
        <taxon>Geobacterales</taxon>
        <taxon>Geobacteraceae</taxon>
        <taxon>Geobacter</taxon>
    </lineage>
</organism>
<accession>Q39VG2</accession>
<dbReference type="EC" id="2.3.1.310" evidence="1"/>
<dbReference type="EMBL" id="CP000148">
    <property type="protein sequence ID" value="ABB31762.1"/>
    <property type="molecule type" value="Genomic_DNA"/>
</dbReference>
<dbReference type="RefSeq" id="WP_004511539.1">
    <property type="nucleotide sequence ID" value="NC_007517.1"/>
</dbReference>
<dbReference type="PDB" id="7PXP">
    <property type="method" value="X-ray"/>
    <property type="resolution" value="2.00 A"/>
    <property type="chains" value="A/B/E/F=1-146"/>
</dbReference>
<dbReference type="PDB" id="7PYT">
    <property type="method" value="X-ray"/>
    <property type="resolution" value="1.70 A"/>
    <property type="chains" value="A/C=1-146"/>
</dbReference>
<dbReference type="PDB" id="7YXM">
    <property type="method" value="X-ray"/>
    <property type="resolution" value="1.70 A"/>
    <property type="chains" value="A/C=1-146"/>
</dbReference>
<dbReference type="PDBsum" id="7PXP"/>
<dbReference type="PDBsum" id="7PYT"/>
<dbReference type="PDBsum" id="7YXM"/>
<dbReference type="SMR" id="Q39VG2"/>
<dbReference type="STRING" id="269799.Gmet_1528"/>
<dbReference type="DNASU" id="3740128"/>
<dbReference type="KEGG" id="gme:Gmet_1528"/>
<dbReference type="eggNOG" id="COG1545">
    <property type="taxonomic scope" value="Bacteria"/>
</dbReference>
<dbReference type="HOGENOM" id="CLU_1803037_0_0_7"/>
<dbReference type="UniPathway" id="UPA00273"/>
<dbReference type="Proteomes" id="UP000007073">
    <property type="component" value="Chromosome"/>
</dbReference>
<dbReference type="GO" id="GO:0016746">
    <property type="term" value="F:acyltransferase activity"/>
    <property type="evidence" value="ECO:0007669"/>
    <property type="project" value="UniProtKB-KW"/>
</dbReference>
<dbReference type="GO" id="GO:0046872">
    <property type="term" value="F:metal ion binding"/>
    <property type="evidence" value="ECO:0007669"/>
    <property type="project" value="UniProtKB-KW"/>
</dbReference>
<dbReference type="GO" id="GO:0009056">
    <property type="term" value="P:catabolic process"/>
    <property type="evidence" value="ECO:0007669"/>
    <property type="project" value="UniProtKB-KW"/>
</dbReference>
<dbReference type="InterPro" id="IPR002878">
    <property type="entry name" value="ChsH2_C"/>
</dbReference>
<dbReference type="InterPro" id="IPR022002">
    <property type="entry name" value="ChsH2_Znr"/>
</dbReference>
<dbReference type="InterPro" id="IPR012340">
    <property type="entry name" value="NA-bd_OB-fold"/>
</dbReference>
<dbReference type="InterPro" id="IPR052513">
    <property type="entry name" value="Thioester_dehydratase-like"/>
</dbReference>
<dbReference type="PANTHER" id="PTHR34075">
    <property type="entry name" value="BLR3430 PROTEIN"/>
    <property type="match status" value="1"/>
</dbReference>
<dbReference type="PANTHER" id="PTHR34075:SF5">
    <property type="entry name" value="BLR3430 PROTEIN"/>
    <property type="match status" value="1"/>
</dbReference>
<dbReference type="Pfam" id="PF01796">
    <property type="entry name" value="OB_ChsH2_C"/>
    <property type="match status" value="1"/>
</dbReference>
<dbReference type="Pfam" id="PF12172">
    <property type="entry name" value="zf-ChsH2"/>
    <property type="match status" value="1"/>
</dbReference>
<dbReference type="SUPFAM" id="SSF50249">
    <property type="entry name" value="Nucleic acid-binding proteins"/>
    <property type="match status" value="1"/>
</dbReference>
<gene>
    <name evidence="2" type="primary">bbsA</name>
    <name evidence="5" type="ordered locus">Gmet_1528</name>
</gene>
<feature type="chain" id="PRO_0000461308" description="Benzoylsuccinyl-CoA thiolase subunit BbsA">
    <location>
        <begin position="1"/>
        <end position="146"/>
    </location>
</feature>
<feature type="binding site" evidence="1 6 7 8">
    <location>
        <position position="42"/>
    </location>
    <ligand>
        <name>Zn(2+)</name>
        <dbReference type="ChEBI" id="CHEBI:29105"/>
    </ligand>
</feature>
<feature type="binding site" evidence="1 6 7 8">
    <location>
        <position position="45"/>
    </location>
    <ligand>
        <name>Zn(2+)</name>
        <dbReference type="ChEBI" id="CHEBI:29105"/>
    </ligand>
</feature>
<feature type="binding site" evidence="1 6 7 8">
    <location>
        <position position="55"/>
    </location>
    <ligand>
        <name>Zn(2+)</name>
        <dbReference type="ChEBI" id="CHEBI:29105"/>
    </ligand>
</feature>
<feature type="binding site" evidence="1 6 7 8">
    <location>
        <position position="58"/>
    </location>
    <ligand>
        <name>Zn(2+)</name>
        <dbReference type="ChEBI" id="CHEBI:29105"/>
    </ligand>
</feature>
<feature type="strand" evidence="9">
    <location>
        <begin position="19"/>
        <end position="21"/>
    </location>
</feature>
<feature type="turn" evidence="10">
    <location>
        <begin position="23"/>
        <end position="25"/>
    </location>
</feature>
<feature type="strand" evidence="10">
    <location>
        <begin position="36"/>
        <end position="42"/>
    </location>
</feature>
<feature type="turn" evidence="10">
    <location>
        <begin position="43"/>
        <end position="45"/>
    </location>
</feature>
<feature type="strand" evidence="10">
    <location>
        <begin position="48"/>
        <end position="51"/>
    </location>
</feature>
<feature type="turn" evidence="10">
    <location>
        <begin position="56"/>
        <end position="58"/>
    </location>
</feature>
<feature type="strand" evidence="10">
    <location>
        <begin position="63"/>
        <end position="67"/>
    </location>
</feature>
<feature type="strand" evidence="10">
    <location>
        <begin position="70"/>
        <end position="82"/>
    </location>
</feature>
<feature type="strand" evidence="10">
    <location>
        <begin position="89"/>
        <end position="98"/>
    </location>
</feature>
<feature type="turn" evidence="10">
    <location>
        <begin position="99"/>
        <end position="101"/>
    </location>
</feature>
<feature type="strand" evidence="10">
    <location>
        <begin position="102"/>
        <end position="108"/>
    </location>
</feature>
<feature type="strand" evidence="10">
    <location>
        <begin position="120"/>
        <end position="130"/>
    </location>
</feature>
<feature type="strand" evidence="10">
    <location>
        <begin position="136"/>
        <end position="144"/>
    </location>
</feature>
<reference key="1">
    <citation type="journal article" date="2009" name="BMC Microbiol.">
        <title>The genome sequence of Geobacter metallireducens: features of metabolism, physiology and regulation common and dissimilar to Geobacter sulfurreducens.</title>
        <authorList>
            <person name="Aklujkar M."/>
            <person name="Krushkal J."/>
            <person name="DiBartolo G."/>
            <person name="Lapidus A."/>
            <person name="Land M.L."/>
            <person name="Lovley D.R."/>
        </authorList>
    </citation>
    <scope>NUCLEOTIDE SEQUENCE [LARGE SCALE GENOMIC DNA]</scope>
    <source>
        <strain>ATCC 53774 / DSM 7210 / GS-15</strain>
    </source>
</reference>
<reference evidence="6 7 8" key="2">
    <citation type="journal article" date="2022" name="FEBS J.">
        <title>Finis tolueni: a new type of thiolase with an integrated Zn-finger subunit catalyzes the final step of anaerobic toluene metabolism.</title>
        <authorList>
            <person name="Weidenweber S."/>
            <person name="Schuhle K."/>
            <person name="Lippert M.L."/>
            <person name="Mock J."/>
            <person name="Seubert A."/>
            <person name="Demmer U."/>
            <person name="Ermler U."/>
            <person name="Heider J."/>
        </authorList>
    </citation>
    <scope>X-RAY CRYSTALLOGRAPHY (1.70 ANGSTROMS) IN COMPLEX WITH BBSB AND ZN(2+)</scope>
    <scope>FUNCTION</scope>
    <scope>CATALYTIC ACTIVITY</scope>
    <scope>PATHWAY</scope>
    <scope>SUBUNIT</scope>
    <scope>DOMAIN</scope>
</reference>
<proteinExistence type="evidence at protein level"/>
<protein>
    <recommendedName>
        <fullName evidence="2">Benzoylsuccinyl-CoA thiolase subunit BbsA</fullName>
        <ecNumber evidence="1">2.3.1.310</ecNumber>
    </recommendedName>
    <alternativeName>
        <fullName evidence="2">Zn-finger protein BbsA</fullName>
    </alternativeName>
</protein>
<name>BBSA_GEOMG</name>
<keyword id="KW-0002">3D-structure</keyword>
<keyword id="KW-0012">Acyltransferase</keyword>
<keyword id="KW-0058">Aromatic hydrocarbons catabolism</keyword>
<keyword id="KW-0479">Metal-binding</keyword>
<keyword id="KW-1185">Reference proteome</keyword>
<keyword id="KW-0808">Transferase</keyword>
<keyword id="KW-0862">Zinc</keyword>
<comment type="function">
    <text evidence="1">Component of the BbsAB thiolase complex, which catalyzes the thiolytic cleavage of (S)-2-benzoylsuccinyl-CoA to succinyl-CoA and benzoyl-CoA, the final step of anaerobic toluene metabolism (PubMed:35313080). The BbsA subunit critically contributes to an induced-fit process for productive binding of a CoA substrate into the active site of BbsB (PubMed:35313080).</text>
</comment>
<comment type="catalytic activity">
    <reaction evidence="1">
        <text>(S)-2-benzoylsuccinyl-CoA + CoA = benzoyl-CoA + succinyl-CoA</text>
        <dbReference type="Rhea" id="RHEA:74147"/>
        <dbReference type="ChEBI" id="CHEBI:57287"/>
        <dbReference type="ChEBI" id="CHEBI:57292"/>
        <dbReference type="ChEBI" id="CHEBI:57369"/>
        <dbReference type="ChEBI" id="CHEBI:189060"/>
        <dbReference type="EC" id="2.3.1.310"/>
    </reaction>
    <physiologicalReaction direction="left-to-right" evidence="4">
        <dbReference type="Rhea" id="RHEA:74148"/>
    </physiologicalReaction>
</comment>
<comment type="pathway">
    <text evidence="1">Xenobiotic degradation; toluene degradation.</text>
</comment>
<comment type="subunit">
    <text evidence="1">Heterotetramer composed of two BbsA subunits and two BbsB subunits (PubMed:35313080). Both BbsA and BbsB are essential for enzymatic activity (PubMed:35313080).</text>
</comment>
<comment type="domain">
    <text evidence="1">Contains an N-terminal rubredoxin-like zinc finger domain (residues 16-70) and an oligonucleotide/oligosaccharide binding (OB) C-terminal domain (residues 71-160) (PubMed:35313080). Binding of CoA to the BbsB subunit induces conformational changes of BbsA and BbsB, which may directly affect the turnover process of BbsAB (PubMed:35313080).</text>
</comment>
<comment type="similarity">
    <text evidence="3">Belongs to the BbsA family.</text>
</comment>
<sequence>MAKEEVKQKKTKEKEPDITFFHPDILEVPKDGGLPYLKGYRCKKCGQLDFKTEMCTNCWSEEFEMVPLSRRGKVYSFSDIYIGQQGLATPYIFAYVDLPENLRVFAQLEGEVDTYRCDEEVELTLGPIRMNNDNLPIISYKFKKIA</sequence>